<proteinExistence type="evidence at protein level"/>
<accession>P39138</accession>
<protein>
    <recommendedName>
        <fullName>Arginase</fullName>
        <ecNumber evidence="5">3.5.3.1</ecNumber>
    </recommendedName>
</protein>
<feature type="chain" id="PRO_0000173715" description="Arginase">
    <location>
        <begin position="1"/>
        <end position="296"/>
    </location>
</feature>
<feature type="binding site" evidence="3">
    <location>
        <position position="97"/>
    </location>
    <ligand>
        <name>Mn(2+)</name>
        <dbReference type="ChEBI" id="CHEBI:29035"/>
        <label>1</label>
    </ligand>
</feature>
<feature type="binding site" evidence="3">
    <location>
        <position position="120"/>
    </location>
    <ligand>
        <name>Mn(2+)</name>
        <dbReference type="ChEBI" id="CHEBI:29035"/>
        <label>1</label>
    </ligand>
</feature>
<feature type="binding site" evidence="3">
    <location>
        <position position="120"/>
    </location>
    <ligand>
        <name>Mn(2+)</name>
        <dbReference type="ChEBI" id="CHEBI:29035"/>
        <label>2</label>
    </ligand>
</feature>
<feature type="binding site" evidence="2">
    <location>
        <begin position="122"/>
        <end position="126"/>
    </location>
    <ligand>
        <name>substrate</name>
    </ligand>
</feature>
<feature type="binding site" evidence="3">
    <location>
        <position position="122"/>
    </location>
    <ligand>
        <name>Mn(2+)</name>
        <dbReference type="ChEBI" id="CHEBI:29035"/>
        <label>2</label>
    </ligand>
</feature>
<feature type="binding site" evidence="3">
    <location>
        <position position="124"/>
    </location>
    <ligand>
        <name>Mn(2+)</name>
        <dbReference type="ChEBI" id="CHEBI:29035"/>
        <label>1</label>
    </ligand>
</feature>
<feature type="binding site" evidence="2">
    <location>
        <begin position="133"/>
        <end position="135"/>
    </location>
    <ligand>
        <name>substrate</name>
    </ligand>
</feature>
<feature type="binding site" evidence="2">
    <location>
        <position position="176"/>
    </location>
    <ligand>
        <name>substrate</name>
    </ligand>
</feature>
<feature type="binding site" evidence="3">
    <location>
        <position position="223"/>
    </location>
    <ligand>
        <name>Mn(2+)</name>
        <dbReference type="ChEBI" id="CHEBI:29035"/>
        <label>1</label>
    </ligand>
</feature>
<feature type="binding site" evidence="3">
    <location>
        <position position="223"/>
    </location>
    <ligand>
        <name>Mn(2+)</name>
        <dbReference type="ChEBI" id="CHEBI:29035"/>
        <label>2</label>
    </ligand>
</feature>
<feature type="binding site" evidence="3">
    <location>
        <position position="225"/>
    </location>
    <ligand>
        <name>Mn(2+)</name>
        <dbReference type="ChEBI" id="CHEBI:29035"/>
        <label>2</label>
    </ligand>
</feature>
<feature type="binding site" evidence="2">
    <location>
        <position position="237"/>
    </location>
    <ligand>
        <name>substrate</name>
    </ligand>
</feature>
<feature type="binding site" evidence="2">
    <location>
        <position position="268"/>
    </location>
    <ligand>
        <name>substrate</name>
    </ligand>
</feature>
<feature type="strand" evidence="7">
    <location>
        <begin position="5"/>
        <end position="10"/>
    </location>
</feature>
<feature type="strand" evidence="7">
    <location>
        <begin position="15"/>
        <end position="17"/>
    </location>
</feature>
<feature type="helix" evidence="7">
    <location>
        <begin position="21"/>
        <end position="23"/>
    </location>
</feature>
<feature type="helix" evidence="7">
    <location>
        <begin position="24"/>
        <end position="30"/>
    </location>
</feature>
<feature type="helix" evidence="7">
    <location>
        <begin position="33"/>
        <end position="39"/>
    </location>
</feature>
<feature type="strand" evidence="7">
    <location>
        <begin position="44"/>
        <end position="49"/>
    </location>
</feature>
<feature type="helix" evidence="7">
    <location>
        <begin position="66"/>
        <end position="85"/>
    </location>
</feature>
<feature type="strand" evidence="7">
    <location>
        <begin position="89"/>
        <end position="96"/>
    </location>
</feature>
<feature type="helix" evidence="7">
    <location>
        <begin position="97"/>
        <end position="99"/>
    </location>
</feature>
<feature type="helix" evidence="7">
    <location>
        <begin position="100"/>
        <end position="108"/>
    </location>
</feature>
<feature type="strand" evidence="7">
    <location>
        <begin position="112"/>
        <end position="122"/>
    </location>
</feature>
<feature type="turn" evidence="7">
    <location>
        <begin position="128"/>
        <end position="130"/>
    </location>
</feature>
<feature type="helix" evidence="7">
    <location>
        <begin position="136"/>
        <end position="138"/>
    </location>
</feature>
<feature type="helix" evidence="7">
    <location>
        <begin position="140"/>
        <end position="144"/>
    </location>
</feature>
<feature type="helix" evidence="7">
    <location>
        <begin position="150"/>
        <end position="153"/>
    </location>
</feature>
<feature type="helix" evidence="7">
    <location>
        <begin position="155"/>
        <end position="157"/>
    </location>
</feature>
<feature type="helix" evidence="7">
    <location>
        <begin position="164"/>
        <end position="166"/>
    </location>
</feature>
<feature type="strand" evidence="7">
    <location>
        <begin position="167"/>
        <end position="172"/>
    </location>
</feature>
<feature type="helix" evidence="7">
    <location>
        <begin position="177"/>
        <end position="186"/>
    </location>
</feature>
<feature type="strand" evidence="7">
    <location>
        <begin position="189"/>
        <end position="192"/>
    </location>
</feature>
<feature type="helix" evidence="7">
    <location>
        <begin position="193"/>
        <end position="199"/>
    </location>
</feature>
<feature type="helix" evidence="7">
    <location>
        <begin position="201"/>
        <end position="211"/>
    </location>
</feature>
<feature type="turn" evidence="7">
    <location>
        <begin position="212"/>
        <end position="214"/>
    </location>
</feature>
<feature type="strand" evidence="7">
    <location>
        <begin position="216"/>
        <end position="223"/>
    </location>
</feature>
<feature type="helix" evidence="7">
    <location>
        <begin position="224"/>
        <end position="226"/>
    </location>
</feature>
<feature type="turn" evidence="7">
    <location>
        <begin position="229"/>
        <end position="231"/>
    </location>
</feature>
<feature type="strand" evidence="7">
    <location>
        <begin position="235"/>
        <end position="237"/>
    </location>
</feature>
<feature type="helix" evidence="7">
    <location>
        <begin position="245"/>
        <end position="258"/>
    </location>
</feature>
<feature type="strand" evidence="7">
    <location>
        <begin position="261"/>
        <end position="267"/>
    </location>
</feature>
<feature type="helix" evidence="7">
    <location>
        <begin position="271"/>
        <end position="273"/>
    </location>
</feature>
<feature type="helix" evidence="7">
    <location>
        <begin position="278"/>
        <end position="290"/>
    </location>
</feature>
<evidence type="ECO:0000250" key="1">
    <source>
        <dbReference type="UniProtKB" id="P05089"/>
    </source>
</evidence>
<evidence type="ECO:0000250" key="2">
    <source>
        <dbReference type="UniProtKB" id="P53608"/>
    </source>
</evidence>
<evidence type="ECO:0000255" key="3">
    <source>
        <dbReference type="PROSITE-ProRule" id="PRU00742"/>
    </source>
</evidence>
<evidence type="ECO:0000269" key="4">
    <source>
    </source>
</evidence>
<evidence type="ECO:0000269" key="5">
    <source>
    </source>
</evidence>
<evidence type="ECO:0000303" key="6">
    <source>
    </source>
</evidence>
<evidence type="ECO:0007829" key="7">
    <source>
        <dbReference type="PDB" id="6NFP"/>
    </source>
</evidence>
<reference key="1">
    <citation type="journal article" date="1995" name="J. Mol. Biol.">
        <title>Expression of the rocDEF operon involved in arginine catabolism in Bacillus subtilis.</title>
        <authorList>
            <person name="Gardan R."/>
            <person name="Rapoport G."/>
            <person name="Debarbouille M."/>
        </authorList>
    </citation>
    <scope>NUCLEOTIDE SEQUENCE [GENOMIC DNA]</scope>
    <scope>FUNCTION AS AN ARGINASE AND IN ARGININE CATABOLISM</scope>
    <scope>CATALYTIC ACTIVITY</scope>
    <scope>DISRUPTION PHENOTYPE</scope>
    <scope>INDUCTION</scope>
    <source>
        <strain>168</strain>
    </source>
</reference>
<reference key="2">
    <citation type="journal article" date="1997" name="DNA Res.">
        <title>Sequence analysis of the 36-kb region between gntZ and trnY genes of Bacillus subtilis genome.</title>
        <authorList>
            <person name="Kasahara Y."/>
            <person name="Nakai S."/>
            <person name="Ogasawara N."/>
        </authorList>
    </citation>
    <scope>NUCLEOTIDE SEQUENCE [GENOMIC DNA]</scope>
    <source>
        <strain>168</strain>
    </source>
</reference>
<reference key="3">
    <citation type="journal article" date="1997" name="Nature">
        <title>The complete genome sequence of the Gram-positive bacterium Bacillus subtilis.</title>
        <authorList>
            <person name="Kunst F."/>
            <person name="Ogasawara N."/>
            <person name="Moszer I."/>
            <person name="Albertini A.M."/>
            <person name="Alloni G."/>
            <person name="Azevedo V."/>
            <person name="Bertero M.G."/>
            <person name="Bessieres P."/>
            <person name="Bolotin A."/>
            <person name="Borchert S."/>
            <person name="Borriss R."/>
            <person name="Boursier L."/>
            <person name="Brans A."/>
            <person name="Braun M."/>
            <person name="Brignell S.C."/>
            <person name="Bron S."/>
            <person name="Brouillet S."/>
            <person name="Bruschi C.V."/>
            <person name="Caldwell B."/>
            <person name="Capuano V."/>
            <person name="Carter N.M."/>
            <person name="Choi S.-K."/>
            <person name="Codani J.-J."/>
            <person name="Connerton I.F."/>
            <person name="Cummings N.J."/>
            <person name="Daniel R.A."/>
            <person name="Denizot F."/>
            <person name="Devine K.M."/>
            <person name="Duesterhoeft A."/>
            <person name="Ehrlich S.D."/>
            <person name="Emmerson P.T."/>
            <person name="Entian K.-D."/>
            <person name="Errington J."/>
            <person name="Fabret C."/>
            <person name="Ferrari E."/>
            <person name="Foulger D."/>
            <person name="Fritz C."/>
            <person name="Fujita M."/>
            <person name="Fujita Y."/>
            <person name="Fuma S."/>
            <person name="Galizzi A."/>
            <person name="Galleron N."/>
            <person name="Ghim S.-Y."/>
            <person name="Glaser P."/>
            <person name="Goffeau A."/>
            <person name="Golightly E.J."/>
            <person name="Grandi G."/>
            <person name="Guiseppi G."/>
            <person name="Guy B.J."/>
            <person name="Haga K."/>
            <person name="Haiech J."/>
            <person name="Harwood C.R."/>
            <person name="Henaut A."/>
            <person name="Hilbert H."/>
            <person name="Holsappel S."/>
            <person name="Hosono S."/>
            <person name="Hullo M.-F."/>
            <person name="Itaya M."/>
            <person name="Jones L.-M."/>
            <person name="Joris B."/>
            <person name="Karamata D."/>
            <person name="Kasahara Y."/>
            <person name="Klaerr-Blanchard M."/>
            <person name="Klein C."/>
            <person name="Kobayashi Y."/>
            <person name="Koetter P."/>
            <person name="Koningstein G."/>
            <person name="Krogh S."/>
            <person name="Kumano M."/>
            <person name="Kurita K."/>
            <person name="Lapidus A."/>
            <person name="Lardinois S."/>
            <person name="Lauber J."/>
            <person name="Lazarevic V."/>
            <person name="Lee S.-M."/>
            <person name="Levine A."/>
            <person name="Liu H."/>
            <person name="Masuda S."/>
            <person name="Mauel C."/>
            <person name="Medigue C."/>
            <person name="Medina N."/>
            <person name="Mellado R.P."/>
            <person name="Mizuno M."/>
            <person name="Moestl D."/>
            <person name="Nakai S."/>
            <person name="Noback M."/>
            <person name="Noone D."/>
            <person name="O'Reilly M."/>
            <person name="Ogawa K."/>
            <person name="Ogiwara A."/>
            <person name="Oudega B."/>
            <person name="Park S.-H."/>
            <person name="Parro V."/>
            <person name="Pohl T.M."/>
            <person name="Portetelle D."/>
            <person name="Porwollik S."/>
            <person name="Prescott A.M."/>
            <person name="Presecan E."/>
            <person name="Pujic P."/>
            <person name="Purnelle B."/>
            <person name="Rapoport G."/>
            <person name="Rey M."/>
            <person name="Reynolds S."/>
            <person name="Rieger M."/>
            <person name="Rivolta C."/>
            <person name="Rocha E."/>
            <person name="Roche B."/>
            <person name="Rose M."/>
            <person name="Sadaie Y."/>
            <person name="Sato T."/>
            <person name="Scanlan E."/>
            <person name="Schleich S."/>
            <person name="Schroeter R."/>
            <person name="Scoffone F."/>
            <person name="Sekiguchi J."/>
            <person name="Sekowska A."/>
            <person name="Seror S.J."/>
            <person name="Serror P."/>
            <person name="Shin B.-S."/>
            <person name="Soldo B."/>
            <person name="Sorokin A."/>
            <person name="Tacconi E."/>
            <person name="Takagi T."/>
            <person name="Takahashi H."/>
            <person name="Takemaru K."/>
            <person name="Takeuchi M."/>
            <person name="Tamakoshi A."/>
            <person name="Tanaka T."/>
            <person name="Terpstra P."/>
            <person name="Tognoni A."/>
            <person name="Tosato V."/>
            <person name="Uchiyama S."/>
            <person name="Vandenbol M."/>
            <person name="Vannier F."/>
            <person name="Vassarotti A."/>
            <person name="Viari A."/>
            <person name="Wambutt R."/>
            <person name="Wedler E."/>
            <person name="Wedler H."/>
            <person name="Weitzenegger T."/>
            <person name="Winters P."/>
            <person name="Wipat A."/>
            <person name="Yamamoto H."/>
            <person name="Yamane K."/>
            <person name="Yasumoto K."/>
            <person name="Yata K."/>
            <person name="Yoshida K."/>
            <person name="Yoshikawa H.-F."/>
            <person name="Zumstein E."/>
            <person name="Yoshikawa H."/>
            <person name="Danchin A."/>
        </authorList>
    </citation>
    <scope>NUCLEOTIDE SEQUENCE [LARGE SCALE GENOMIC DNA]</scope>
    <source>
        <strain>168</strain>
    </source>
</reference>
<reference key="4">
    <citation type="journal article" date="1979" name="J. Bacteriol.">
        <title>Carbon and nitrogen repression of arginine catabolic enzymes in Bacillus subtilis.</title>
        <authorList>
            <person name="Baumberg S."/>
            <person name="Harwood C.R."/>
        </authorList>
    </citation>
    <scope>INDUCTION</scope>
</reference>
<comment type="function">
    <text evidence="5">Involved in the catabolism of arginine.</text>
</comment>
<comment type="catalytic activity">
    <reaction evidence="5">
        <text>L-arginine + H2O = urea + L-ornithine</text>
        <dbReference type="Rhea" id="RHEA:20569"/>
        <dbReference type="ChEBI" id="CHEBI:15377"/>
        <dbReference type="ChEBI" id="CHEBI:16199"/>
        <dbReference type="ChEBI" id="CHEBI:32682"/>
        <dbReference type="ChEBI" id="CHEBI:46911"/>
        <dbReference type="EC" id="3.5.3.1"/>
    </reaction>
</comment>
<comment type="cofactor">
    <cofactor evidence="3">
        <name>Mn(2+)</name>
        <dbReference type="ChEBI" id="CHEBI:29035"/>
    </cofactor>
    <text evidence="3">Binds 2 manganese ions per subunit.</text>
</comment>
<comment type="pathway">
    <text evidence="1">Nitrogen metabolism; urea cycle; L-ornithine and urea from L-arginine: step 1/1.</text>
</comment>
<comment type="induction">
    <text evidence="4 5">Part of the rocDEF operon. Expression is sigma L dependent, induced by arginine, ornithine or proline.</text>
</comment>
<comment type="disruption phenotype">
    <text evidence="5">Cells lacking this gene do not grow on arginine as a sole nitrogen source, but do grow on ornithine or ammonium chloride.</text>
</comment>
<comment type="similarity">
    <text evidence="3">Belongs to the arginase family.</text>
</comment>
<organism>
    <name type="scientific">Bacillus subtilis (strain 168)</name>
    <dbReference type="NCBI Taxonomy" id="224308"/>
    <lineage>
        <taxon>Bacteria</taxon>
        <taxon>Bacillati</taxon>
        <taxon>Bacillota</taxon>
        <taxon>Bacilli</taxon>
        <taxon>Bacillales</taxon>
        <taxon>Bacillaceae</taxon>
        <taxon>Bacillus</taxon>
    </lineage>
</organism>
<dbReference type="EC" id="3.5.3.1" evidence="5"/>
<dbReference type="EMBL" id="X81802">
    <property type="protein sequence ID" value="CAA57400.1"/>
    <property type="molecule type" value="Genomic_DNA"/>
</dbReference>
<dbReference type="EMBL" id="D78193">
    <property type="protein sequence ID" value="BAA11291.1"/>
    <property type="molecule type" value="Genomic_DNA"/>
</dbReference>
<dbReference type="EMBL" id="AL009126">
    <property type="protein sequence ID" value="CAB16069.1"/>
    <property type="molecule type" value="Genomic_DNA"/>
</dbReference>
<dbReference type="PIR" id="S55795">
    <property type="entry name" value="S55795"/>
</dbReference>
<dbReference type="RefSeq" id="WP_003226959.1">
    <property type="nucleotide sequence ID" value="NZ_OZ025638.1"/>
</dbReference>
<dbReference type="PDB" id="6DKT">
    <property type="method" value="X-ray"/>
    <property type="resolution" value="2.08 A"/>
    <property type="chains" value="A/B/C/D/E/F=1-296"/>
</dbReference>
<dbReference type="PDB" id="6NFP">
    <property type="method" value="X-ray"/>
    <property type="resolution" value="1.70 A"/>
    <property type="chains" value="A/B/C/D/E/F=1-296"/>
</dbReference>
<dbReference type="PDBsum" id="6DKT"/>
<dbReference type="PDBsum" id="6NFP"/>
<dbReference type="SMR" id="P39138"/>
<dbReference type="FunCoup" id="P39138">
    <property type="interactions" value="326"/>
</dbReference>
<dbReference type="STRING" id="224308.BSU40320"/>
<dbReference type="jPOST" id="P39138"/>
<dbReference type="PaxDb" id="224308-BSU40320"/>
<dbReference type="EnsemblBacteria" id="CAB16069">
    <property type="protein sequence ID" value="CAB16069"/>
    <property type="gene ID" value="BSU_40320"/>
</dbReference>
<dbReference type="GeneID" id="86871329"/>
<dbReference type="GeneID" id="937760"/>
<dbReference type="KEGG" id="bsu:BSU40320"/>
<dbReference type="PATRIC" id="fig|224308.179.peg.4362"/>
<dbReference type="eggNOG" id="COG0010">
    <property type="taxonomic scope" value="Bacteria"/>
</dbReference>
<dbReference type="InParanoid" id="P39138"/>
<dbReference type="OrthoDB" id="9789727at2"/>
<dbReference type="PhylomeDB" id="P39138"/>
<dbReference type="BioCyc" id="BSUB:BSU40320-MONOMER"/>
<dbReference type="BioCyc" id="MetaCyc:BSU40320-MONOMER"/>
<dbReference type="BRENDA" id="3.5.3.1">
    <property type="organism ID" value="658"/>
</dbReference>
<dbReference type="UniPathway" id="UPA00158">
    <property type="reaction ID" value="UER00270"/>
</dbReference>
<dbReference type="Proteomes" id="UP000001570">
    <property type="component" value="Chromosome"/>
</dbReference>
<dbReference type="GO" id="GO:0005737">
    <property type="term" value="C:cytoplasm"/>
    <property type="evidence" value="ECO:0000318"/>
    <property type="project" value="GO_Central"/>
</dbReference>
<dbReference type="GO" id="GO:0004053">
    <property type="term" value="F:arginase activity"/>
    <property type="evidence" value="ECO:0000314"/>
    <property type="project" value="UniProtKB"/>
</dbReference>
<dbReference type="GO" id="GO:0030145">
    <property type="term" value="F:manganese ion binding"/>
    <property type="evidence" value="ECO:0000318"/>
    <property type="project" value="GO_Central"/>
</dbReference>
<dbReference type="GO" id="GO:0019547">
    <property type="term" value="P:arginine catabolic process to ornithine"/>
    <property type="evidence" value="ECO:0000318"/>
    <property type="project" value="GO_Central"/>
</dbReference>
<dbReference type="GO" id="GO:0006525">
    <property type="term" value="P:arginine metabolic process"/>
    <property type="evidence" value="ECO:0000314"/>
    <property type="project" value="UniProtKB"/>
</dbReference>
<dbReference type="GO" id="GO:0000050">
    <property type="term" value="P:urea cycle"/>
    <property type="evidence" value="ECO:0007669"/>
    <property type="project" value="UniProtKB-UniPathway"/>
</dbReference>
<dbReference type="CDD" id="cd09989">
    <property type="entry name" value="Arginase"/>
    <property type="match status" value="1"/>
</dbReference>
<dbReference type="FunFam" id="3.40.800.10:FF:000005">
    <property type="entry name" value="Arginase"/>
    <property type="match status" value="1"/>
</dbReference>
<dbReference type="Gene3D" id="3.40.800.10">
    <property type="entry name" value="Ureohydrolase domain"/>
    <property type="match status" value="1"/>
</dbReference>
<dbReference type="InterPro" id="IPR014033">
    <property type="entry name" value="Arginase"/>
</dbReference>
<dbReference type="InterPro" id="IPR006035">
    <property type="entry name" value="Ureohydrolase"/>
</dbReference>
<dbReference type="InterPro" id="IPR023696">
    <property type="entry name" value="Ureohydrolase_dom_sf"/>
</dbReference>
<dbReference type="InterPro" id="IPR020855">
    <property type="entry name" value="Ureohydrolase_Mn_BS"/>
</dbReference>
<dbReference type="NCBIfam" id="TIGR01229">
    <property type="entry name" value="rocF_arginase"/>
    <property type="match status" value="1"/>
</dbReference>
<dbReference type="PANTHER" id="PTHR43782">
    <property type="entry name" value="ARGINASE"/>
    <property type="match status" value="1"/>
</dbReference>
<dbReference type="PANTHER" id="PTHR43782:SF3">
    <property type="entry name" value="ARGINASE"/>
    <property type="match status" value="1"/>
</dbReference>
<dbReference type="Pfam" id="PF00491">
    <property type="entry name" value="Arginase"/>
    <property type="match status" value="1"/>
</dbReference>
<dbReference type="PIRSF" id="PIRSF036979">
    <property type="entry name" value="Arginase"/>
    <property type="match status" value="1"/>
</dbReference>
<dbReference type="PRINTS" id="PR00116">
    <property type="entry name" value="ARGINASE"/>
</dbReference>
<dbReference type="SUPFAM" id="SSF52768">
    <property type="entry name" value="Arginase/deacetylase"/>
    <property type="match status" value="1"/>
</dbReference>
<dbReference type="PROSITE" id="PS01053">
    <property type="entry name" value="ARGINASE_1"/>
    <property type="match status" value="1"/>
</dbReference>
<dbReference type="PROSITE" id="PS51409">
    <property type="entry name" value="ARGINASE_2"/>
    <property type="match status" value="1"/>
</dbReference>
<keyword id="KW-0002">3D-structure</keyword>
<keyword id="KW-0056">Arginine metabolism</keyword>
<keyword id="KW-0378">Hydrolase</keyword>
<keyword id="KW-0464">Manganese</keyword>
<keyword id="KW-0479">Metal-binding</keyword>
<keyword id="KW-1185">Reference proteome</keyword>
<name>ARGI_BACSU</name>
<gene>
    <name evidence="6" type="primary">rocF</name>
    <name type="ordered locus">BSU40320</name>
</gene>
<sequence>MDKTISVIGMPMDLGQARRGVDMGPSAIRYAHLIERLSDMGYTVEDLGDIPINREKIKNDEELKNLNSVLAGNEKLAQKVNKVIEEKKFPLVLGGDHSIAIGTLAGTAKHYDNLGVIWYDAHGDLNTLETSPSGNIHGMPLAVSLGIGHESLVNLEGYAPKIKPENVVIIGARSLDEGERKYIKESGMKVYTMHEIDRLGMTKVIEETLDYLSACDGVHLSLDLDGLDPNDAPGVGTPVVGGISYRESHLAMEMLYDAGIITSAEFVEVNPILDHKNKTGKTAVELVESLLGKKLL</sequence>